<feature type="chain" id="PRO_0000251042" description="Probable chemoreceptor glutamine deamidase CheD 1">
    <location>
        <begin position="1"/>
        <end position="166"/>
    </location>
</feature>
<dbReference type="EC" id="3.5.1.44" evidence="1"/>
<dbReference type="EMBL" id="AE016823">
    <property type="protein sequence ID" value="AAS70117.1"/>
    <property type="molecule type" value="Genomic_DNA"/>
</dbReference>
<dbReference type="RefSeq" id="WP_000599744.1">
    <property type="nucleotide sequence ID" value="NC_005823.1"/>
</dbReference>
<dbReference type="SMR" id="Q72S65"/>
<dbReference type="KEGG" id="lic:LIC_11521"/>
<dbReference type="HOGENOM" id="CLU_087854_1_1_12"/>
<dbReference type="Proteomes" id="UP000007037">
    <property type="component" value="Chromosome I"/>
</dbReference>
<dbReference type="GO" id="GO:0050568">
    <property type="term" value="F:protein-glutamine glutaminase activity"/>
    <property type="evidence" value="ECO:0007669"/>
    <property type="project" value="UniProtKB-UniRule"/>
</dbReference>
<dbReference type="GO" id="GO:0006935">
    <property type="term" value="P:chemotaxis"/>
    <property type="evidence" value="ECO:0007669"/>
    <property type="project" value="UniProtKB-UniRule"/>
</dbReference>
<dbReference type="CDD" id="cd16352">
    <property type="entry name" value="CheD"/>
    <property type="match status" value="1"/>
</dbReference>
<dbReference type="Gene3D" id="3.30.1330.200">
    <property type="match status" value="1"/>
</dbReference>
<dbReference type="HAMAP" id="MF_01440">
    <property type="entry name" value="CheD"/>
    <property type="match status" value="1"/>
</dbReference>
<dbReference type="InterPro" id="IPR038592">
    <property type="entry name" value="CheD-like_sf"/>
</dbReference>
<dbReference type="InterPro" id="IPR005659">
    <property type="entry name" value="Chemorcpt_Glu_NH3ase_CheD"/>
</dbReference>
<dbReference type="InterPro" id="IPR011324">
    <property type="entry name" value="Cytotoxic_necrot_fac-like_cat"/>
</dbReference>
<dbReference type="PANTHER" id="PTHR35147:SF3">
    <property type="entry name" value="CHEMORECEPTOR GLUTAMINE DEAMIDASE CHED 1-RELATED"/>
    <property type="match status" value="1"/>
</dbReference>
<dbReference type="PANTHER" id="PTHR35147">
    <property type="entry name" value="CHEMORECEPTOR GLUTAMINE DEAMIDASE CHED-RELATED"/>
    <property type="match status" value="1"/>
</dbReference>
<dbReference type="Pfam" id="PF03975">
    <property type="entry name" value="CheD"/>
    <property type="match status" value="1"/>
</dbReference>
<dbReference type="SUPFAM" id="SSF64438">
    <property type="entry name" value="CNF1/YfiH-like putative cysteine hydrolases"/>
    <property type="match status" value="1"/>
</dbReference>
<organism>
    <name type="scientific">Leptospira interrogans serogroup Icterohaemorrhagiae serovar copenhageni (strain Fiocruz L1-130)</name>
    <dbReference type="NCBI Taxonomy" id="267671"/>
    <lineage>
        <taxon>Bacteria</taxon>
        <taxon>Pseudomonadati</taxon>
        <taxon>Spirochaetota</taxon>
        <taxon>Spirochaetia</taxon>
        <taxon>Leptospirales</taxon>
        <taxon>Leptospiraceae</taxon>
        <taxon>Leptospira</taxon>
    </lineage>
</organism>
<evidence type="ECO:0000255" key="1">
    <source>
        <dbReference type="HAMAP-Rule" id="MF_01440"/>
    </source>
</evidence>
<name>CHED1_LEPIC</name>
<reference key="1">
    <citation type="journal article" date="2004" name="J. Bacteriol.">
        <title>Comparative genomics of two Leptospira interrogans serovars reveals novel insights into physiology and pathogenesis.</title>
        <authorList>
            <person name="Nascimento A.L.T.O."/>
            <person name="Ko A.I."/>
            <person name="Martins E.A.L."/>
            <person name="Monteiro-Vitorello C.B."/>
            <person name="Ho P.L."/>
            <person name="Haake D.A."/>
            <person name="Verjovski-Almeida S."/>
            <person name="Hartskeerl R.A."/>
            <person name="Marques M.V."/>
            <person name="Oliveira M.C."/>
            <person name="Menck C.F.M."/>
            <person name="Leite L.C.C."/>
            <person name="Carrer H."/>
            <person name="Coutinho L.L."/>
            <person name="Degrave W.M."/>
            <person name="Dellagostin O.A."/>
            <person name="El-Dorry H."/>
            <person name="Ferro E.S."/>
            <person name="Ferro M.I.T."/>
            <person name="Furlan L.R."/>
            <person name="Gamberini M."/>
            <person name="Giglioti E.A."/>
            <person name="Goes-Neto A."/>
            <person name="Goldman G.H."/>
            <person name="Goldman M.H.S."/>
            <person name="Harakava R."/>
            <person name="Jeronimo S.M.B."/>
            <person name="Junqueira-de-Azevedo I.L.M."/>
            <person name="Kimura E.T."/>
            <person name="Kuramae E.E."/>
            <person name="Lemos E.G.M."/>
            <person name="Lemos M.V.F."/>
            <person name="Marino C.L."/>
            <person name="Nunes L.R."/>
            <person name="de Oliveira R.C."/>
            <person name="Pereira G.G."/>
            <person name="Reis M.S."/>
            <person name="Schriefer A."/>
            <person name="Siqueira W.J."/>
            <person name="Sommer P."/>
            <person name="Tsai S.M."/>
            <person name="Simpson A.J.G."/>
            <person name="Ferro J.A."/>
            <person name="Camargo L.E.A."/>
            <person name="Kitajima J.P."/>
            <person name="Setubal J.C."/>
            <person name="Van Sluys M.A."/>
        </authorList>
    </citation>
    <scope>NUCLEOTIDE SEQUENCE [LARGE SCALE GENOMIC DNA]</scope>
    <source>
        <strain>Fiocruz L1-130</strain>
    </source>
</reference>
<gene>
    <name evidence="1" type="primary">cheD1</name>
    <name type="ordered locus">LIC_11521</name>
</gene>
<accession>Q72S65</accession>
<proteinExistence type="inferred from homology"/>
<sequence>MILEPDTVIDLFLQPGGFYWGKGNIRIRTLLGSCVSICFWHPSLLYGGMAHVMLPFRPSSIHSDDSLNAKYAEDAFQLFFEKLEGFKKQYQIKLFGGASMFSTEEEKLLELKSVRDIGMKNILSIKEHLIRNQLLISSEDLGGFSHRRIFFSLWDGEIYVERPEHT</sequence>
<protein>
    <recommendedName>
        <fullName evidence="1">Probable chemoreceptor glutamine deamidase CheD 1</fullName>
        <ecNumber evidence="1">3.5.1.44</ecNumber>
    </recommendedName>
</protein>
<comment type="function">
    <text evidence="1">Probably deamidates glutamine residues to glutamate on methyl-accepting chemotaxis receptors (MCPs), playing an important role in chemotaxis.</text>
</comment>
<comment type="catalytic activity">
    <reaction evidence="1">
        <text>L-glutaminyl-[protein] + H2O = L-glutamyl-[protein] + NH4(+)</text>
        <dbReference type="Rhea" id="RHEA:16441"/>
        <dbReference type="Rhea" id="RHEA-COMP:10207"/>
        <dbReference type="Rhea" id="RHEA-COMP:10208"/>
        <dbReference type="ChEBI" id="CHEBI:15377"/>
        <dbReference type="ChEBI" id="CHEBI:28938"/>
        <dbReference type="ChEBI" id="CHEBI:29973"/>
        <dbReference type="ChEBI" id="CHEBI:30011"/>
        <dbReference type="EC" id="3.5.1.44"/>
    </reaction>
</comment>
<comment type="similarity">
    <text evidence="1">Belongs to the CheD family.</text>
</comment>
<keyword id="KW-0145">Chemotaxis</keyword>
<keyword id="KW-0378">Hydrolase</keyword>